<sequence>MNPREEKVKIITEEFIENDEDADMGRQNKNSKVRRQPRKKQPPTAVPKEMVSEKSHLGNPQEPVQEEPKTRLLSMTVRRGPRSLPPIPSTSRTGFAEFSMRGRMREKLQAARSKAESALLQEIPTPRPRRLRSPSKKELETEFGTEPGKEVERTQQEVDSQSYSRVKFHDSARKIKPKPQVPPGFPSAEEAYNFFTFNFDPEPEGSEEKPKARHRAGTNQEEEEGEEEEPPAQGGGKEMDEEELLNGDDAEDFLLGLDHVADDFVAVRPADYESIHDRLQMEREMLFIPSRQTVPTYKKLPENVQPRFLEDEGLYTGVRPEVARTNQNIMENRLLMQDPERRWFGDDGRILALPNPIKPFPSRPPVLTQEQSIKAELETLYKKAVKYVHSSQHVIRSGDPPGNFQLDIDISGLIFTHHPCFSREHVLAAKLAQLYDQYLARHQRNKAKFLTDKLQALRNAVQTGLDPEKPHQSLDTIQKTINEYKSEIRQTRKFRDAEQEKDRTLLKTIIKVWKEMKSLREFQRFTNTPLKLVLRKEKADQKADEEAYEAEIQAEISELLEEHTEEYAQKMEEYRTSLQQWKAWRKVQRAKKKKRKQAAEEHPGDEIAEPYPEEDLVKPSPPEPTDRAVIEQEVRERAAQSRRRPWEPTLVPELSLAGSVTPNDQCPRAEVSRREDVKKRSVYLKVLFNNKEVSRTVSRPLGADFRVHFGQIFNLQIVNWPESLTLQVYETVGHSSPTLLAEVFLPIPETTVVTGRAPTEEVEFSSNQHVTLDHEGVGSGVPFSFEADGSNQLTLMTSGKVSHSVAWAIGENGIPLIPPLSQQNIGFRSALKKADAISSIGTSGLTDMKKLAKWAAESKLDPNDPNNAPLMQLISVATSGESYVPDFFRLEQLQQEFNFVSDQELNRSKRFRLLHLRSQEVPEFRNYKQVPVYDREIMEKVFQDYEKRLRDRNVIETKEHIDTHRAIVAKYLQQVRESVINRFLIAKQYFLLADMIVEEEVPNISILGLSLFKLAEQKRPLRPRRKGRKKVTAQNLSDGDIKLLVNIVRAYDIPVRKPAVSKFQQPSRSSRMFSEKHAASPSTYSPTHNADYPLGQVLVRPFVEVSFQRTVCHTTTAEGPNPSWNEELELPFRAPNGDYSTASLQSVKDVVFINIFDEVLHDVLEDDRERGSGIHTRIERHWLGCVKMPFSTIYFQARIDGTFKIDIPPVLLGYSKERNMILERGFDSVRSLSEGSYITLFITIEPQLVPGESIREKFESQEDEKLLQATEKFQAECALKFPNRQCLTTVIDISGKTVFITRYLKPLNPPQELLNVYPNNLQATAELVARYVSLIPFLPDTVSFGGICDLWSTSDQFLDLLAGDEEEHAVLLCNYFLSLGKKAWLLMGNAIPEGPTAYVLTWEQGRYLIWNPCSGHFYGQFDTFCPLKNVGCLIGPDNIWFNIQRYESPLRINFDVTRPKLWKSFFSRSLPYPGLSSVQPEELIYQRSDKAAAAELQDRIEKILKEKIMDWRPRHLTRWNRYCTSTLRHFLPLLEKSQGEDVEDDHRAELLKQLGDYRFSGFPLHMPYSEVKPLIDAVYSTGVHNIDVPNVEFALAVYIHPYPKNVLSVWIYVASLIRNR</sequence>
<gene>
    <name type="primary">CC2D2A</name>
    <name type="synonym">KIAA1345</name>
</gene>
<organism>
    <name type="scientific">Homo sapiens</name>
    <name type="common">Human</name>
    <dbReference type="NCBI Taxonomy" id="9606"/>
    <lineage>
        <taxon>Eukaryota</taxon>
        <taxon>Metazoa</taxon>
        <taxon>Chordata</taxon>
        <taxon>Craniata</taxon>
        <taxon>Vertebrata</taxon>
        <taxon>Euteleostomi</taxon>
        <taxon>Mammalia</taxon>
        <taxon>Eutheria</taxon>
        <taxon>Euarchontoglires</taxon>
        <taxon>Primates</taxon>
        <taxon>Haplorrhini</taxon>
        <taxon>Catarrhini</taxon>
        <taxon>Hominidae</taxon>
        <taxon>Homo</taxon>
    </lineage>
</organism>
<protein>
    <recommendedName>
        <fullName>Coiled-coil and C2 domain-containing protein 2A</fullName>
    </recommendedName>
</protein>
<feature type="chain" id="PRO_0000317250" description="Coiled-coil and C2 domain-containing protein 2A">
    <location>
        <begin position="1"/>
        <end position="1620"/>
    </location>
</feature>
<feature type="domain" description="C2" evidence="3">
    <location>
        <begin position="1025"/>
        <end position="1203"/>
    </location>
</feature>
<feature type="region of interest" description="Disordered" evidence="4">
    <location>
        <begin position="1"/>
        <end position="241"/>
    </location>
</feature>
<feature type="region of interest" description="Disordered" evidence="4">
    <location>
        <begin position="592"/>
        <end position="628"/>
    </location>
</feature>
<feature type="region of interest" description="Disordered" evidence="4">
    <location>
        <begin position="1062"/>
        <end position="1087"/>
    </location>
</feature>
<feature type="coiled-coil region" evidence="2">
    <location>
        <begin position="439"/>
        <end position="493"/>
    </location>
</feature>
<feature type="coiled-coil region" evidence="2">
    <location>
        <begin position="532"/>
        <end position="582"/>
    </location>
</feature>
<feature type="compositionally biased region" description="Basic and acidic residues" evidence="4">
    <location>
        <begin position="1"/>
        <end position="12"/>
    </location>
</feature>
<feature type="compositionally biased region" description="Basic residues" evidence="4">
    <location>
        <begin position="29"/>
        <end position="41"/>
    </location>
</feature>
<feature type="compositionally biased region" description="Basic and acidic residues" evidence="4">
    <location>
        <begin position="103"/>
        <end position="115"/>
    </location>
</feature>
<feature type="compositionally biased region" description="Basic and acidic residues" evidence="4">
    <location>
        <begin position="147"/>
        <end position="156"/>
    </location>
</feature>
<feature type="compositionally biased region" description="Acidic residues" evidence="4">
    <location>
        <begin position="220"/>
        <end position="230"/>
    </location>
</feature>
<feature type="compositionally biased region" description="Polar residues" evidence="4">
    <location>
        <begin position="1062"/>
        <end position="1072"/>
    </location>
</feature>
<feature type="splice variant" id="VSP_030923" description="In isoform 2." evidence="19 20">
    <location>
        <begin position="1"/>
        <end position="49"/>
    </location>
</feature>
<feature type="splice variant" id="VSP_045255" description="In isoform 3." evidence="20">
    <original>PPTAVPKEMVSEKSHLGNPQEPVQEEPKTRLLSMTVRRGPRSLPPIPSTSRTGFAEFSMRGRMREKLQAARSKAESALLQE</original>
    <variation>KPTPFSRACWQILPHLSAGVPLLGWEHPVQGKSFQATNCCPQGNGVRKIPPWQPPGACAGGAQDPPPEYDSPERPTERAGC</variation>
    <location>
        <begin position="42"/>
        <end position="122"/>
    </location>
</feature>
<feature type="splice variant" id="VSP_045453" description="In isoform 4." evidence="20">
    <original>SLPPIPSTSRTGFAEFSMRGRMREKLQAA</original>
    <variation>RELVVKKSLGRPGTVTHVCNPSTLEGRGG</variation>
    <location>
        <begin position="83"/>
        <end position="111"/>
    </location>
</feature>
<feature type="splice variant" id="VSP_045454" description="In isoform 4." evidence="20">
    <location>
        <begin position="112"/>
        <end position="1620"/>
    </location>
</feature>
<feature type="splice variant" id="VSP_045256" description="In isoform 3." evidence="20">
    <location>
        <begin position="123"/>
        <end position="1620"/>
    </location>
</feature>
<feature type="splice variant" id="VSP_037223" description="In isoform 2." evidence="19 20">
    <location>
        <begin position="1199"/>
        <end position="1257"/>
    </location>
</feature>
<feature type="sequence variant" id="VAR_076881" description="In JBTS9; uncertain significance; dbSNP:rs186264635." evidence="11">
    <original>S</original>
    <variation>R</variation>
    <location>
        <position position="117"/>
    </location>
</feature>
<feature type="sequence variant" id="VAR_038489" description="In dbSNP:rs16892095.">
    <original>E</original>
    <variation>A</variation>
    <location>
        <position position="376"/>
    </location>
</feature>
<feature type="sequence variant" id="VAR_076882" description="In JBTS9; benign; dbSNP:rs144439937." evidence="11">
    <original>K</original>
    <variation>E</variation>
    <location>
        <position position="507"/>
    </location>
</feature>
<feature type="sequence variant" id="VAR_076883" description="In JBTS9; dbSNP:rs754221308." evidence="11">
    <original>L</original>
    <variation>P</variation>
    <location>
        <position position="559"/>
    </location>
</feature>
<feature type="sequence variant" id="VAR_038490" description="In dbSNP:rs16892134." evidence="11">
    <original>V</original>
    <variation>I</variation>
    <location>
        <position position="660"/>
    </location>
</feature>
<feature type="sequence variant" id="VAR_076884" description="In dbSNP:rs190698163." evidence="11">
    <original>L</original>
    <variation>I</variation>
    <location>
        <position position="684"/>
    </location>
</feature>
<feature type="sequence variant" id="VAR_076885" description="In dbSNP:rs537906621." evidence="11">
    <original>L</original>
    <variation>V</variation>
    <location>
        <position position="701"/>
    </location>
</feature>
<feature type="sequence variant" id="VAR_062804" description="In JBTS9; dbSNP:rs199768782." evidence="10">
    <original>P</original>
    <variation>S</variation>
    <location>
        <position position="721"/>
    </location>
</feature>
<feature type="sequence variant" id="VAR_062805" description="In dbSNP:rs751256652." evidence="10">
    <original>K</original>
    <variation>E</variation>
    <location>
        <position position="800"/>
    </location>
</feature>
<feature type="sequence variant" id="VAR_087118" description="In RP93; dbSNP:rs200707391." evidence="17">
    <original>R</original>
    <variation>P</variation>
    <location>
        <position position="925"/>
    </location>
</feature>
<feature type="sequence variant" id="VAR_076886" description="In JBTS9; dbSNP:rs863225173." evidence="11">
    <original>V</original>
    <variation>A</variation>
    <location>
        <position position="1045"/>
    </location>
</feature>
<feature type="sequence variant" id="VAR_055321" description="In JBTS9; dbSNP:rs863225169." evidence="7 11">
    <original>Q</original>
    <variation>H</variation>
    <location>
        <position position="1096"/>
    </location>
</feature>
<feature type="sequence variant" id="VAR_062293" description="In MKS6 and JBTS9; dbSNP:rs386833752." evidence="8 10">
    <original>T</original>
    <variation>M</variation>
    <location>
        <position position="1114"/>
    </location>
</feature>
<feature type="sequence variant" id="VAR_063804" description="In COACH2 and JBTS9; dbSNP:rs267606709." evidence="9 11">
    <original>T</original>
    <variation>M</variation>
    <location>
        <position position="1116"/>
    </location>
</feature>
<feature type="sequence variant" id="VAR_055322" description="In JBTS9; dbSNP:rs118204051." evidence="7 11">
    <original>P</original>
    <variation>S</variation>
    <location>
        <position position="1122"/>
    </location>
</feature>
<feature type="sequence variant" id="VAR_068169" description="In JBTS9; dbSNP:rs1473532901." evidence="13 14 16">
    <original>E</original>
    <variation>K</variation>
    <location>
        <position position="1126"/>
    </location>
</feature>
<feature type="sequence variant" id="VAR_076887" description="In JBTS9; dbSNP:rs863225170." evidence="11">
    <original>V</original>
    <variation>A</variation>
    <location>
        <position position="1151"/>
    </location>
</feature>
<feature type="sequence variant" id="VAR_075698" description="In JBTS9; dbSNP:rs386833755." evidence="16">
    <original>W</original>
    <variation>R</variation>
    <location>
        <position position="1182"/>
    </location>
</feature>
<feature type="sequence variant" id="VAR_076888" description="In JBTS9; dbSNP:rs779823379." evidence="11">
    <original>R</original>
    <variation>C</variation>
    <location>
        <position position="1284"/>
    </location>
</feature>
<feature type="sequence variant" id="VAR_076889" description="In JBTS9; dbSNP:rs754586025." evidence="11">
    <original>R</original>
    <variation>H</variation>
    <location>
        <position position="1284"/>
    </location>
</feature>
<feature type="sequence variant" id="VAR_076890" description="In JBTS9; uncertain significance; dbSNP:rs763486732." evidence="11">
    <original>R</original>
    <variation>Q</variation>
    <location>
        <position position="1330"/>
    </location>
</feature>
<feature type="sequence variant" id="VAR_087303" description="In MKS6; uncertain significance." evidence="18">
    <original>G</original>
    <variation>V</variation>
    <location>
        <position position="1363"/>
    </location>
</feature>
<feature type="sequence variant" id="VAR_076891" description="In JBTS9; dbSNP:rs863225168." evidence="11">
    <original>V</original>
    <variation>A</variation>
    <location>
        <position position="1430"/>
    </location>
</feature>
<feature type="sequence variant" id="VAR_067535" description="In JBTS9; digenic inheritance; the patient also carries mutation C-360 in CEP41; dbSNP:rs387907058." evidence="12">
    <original>E</original>
    <variation>A</variation>
    <location>
        <position position="1447"/>
    </location>
</feature>
<feature type="sequence variant" id="VAR_077560" description="In MKS6; uncertain significance; dbSNP:rs780673487." evidence="15">
    <original>T</original>
    <variation>S</variation>
    <location>
        <position position="1517"/>
    </location>
</feature>
<feature type="sequence variant" id="VAR_087304" description="In MKS6; uncertain significance." evidence="18">
    <original>W</original>
    <variation>G</variation>
    <location>
        <position position="1519"/>
    </location>
</feature>
<feature type="sequence variant" id="VAR_069045" description="In JBTS9; dbSNP:rs1478902342." evidence="14 16">
    <original>N</original>
    <variation>S</variation>
    <location>
        <position position="1520"/>
    </location>
</feature>
<feature type="sequence variant" id="VAR_055323" description="In JBTS9 and COACH2; dbSNP:rs118204052." evidence="7 9 11">
    <original>R</original>
    <variation>C</variation>
    <location>
        <position position="1528"/>
    </location>
</feature>
<feature type="sequence variant" id="VAR_055324" description="In JBTS9; dbSNP:rs763425007." evidence="7">
    <original>L</original>
    <variation>P</variation>
    <location>
        <position position="1551"/>
    </location>
</feature>
<feature type="sequence variant" id="VAR_062806" description="In JBTS9; dbSNP:rs201502401." evidence="10 11 13 14 16">
    <original>D</original>
    <variation>V</variation>
    <location>
        <position position="1556"/>
    </location>
</feature>
<feature type="sequence variant" id="VAR_069046" description="In JBTS9." evidence="14 16">
    <original>Y</original>
    <variation>H</variation>
    <location>
        <position position="1568"/>
    </location>
</feature>
<feature type="sequence conflict" description="In Ref. 5; AAI03711." evidence="21" ref="5">
    <original>R</original>
    <variation>S</variation>
    <location>
        <position position="524"/>
    </location>
</feature>
<evidence type="ECO:0000250" key="1"/>
<evidence type="ECO:0000255" key="2"/>
<evidence type="ECO:0000255" key="3">
    <source>
        <dbReference type="PROSITE-ProRule" id="PRU00041"/>
    </source>
</evidence>
<evidence type="ECO:0000256" key="4">
    <source>
        <dbReference type="SAM" id="MobiDB-lite"/>
    </source>
</evidence>
<evidence type="ECO:0000269" key="5">
    <source>
    </source>
</evidence>
<evidence type="ECO:0000269" key="6">
    <source>
    </source>
</evidence>
<evidence type="ECO:0000269" key="7">
    <source>
    </source>
</evidence>
<evidence type="ECO:0000269" key="8">
    <source>
    </source>
</evidence>
<evidence type="ECO:0000269" key="9">
    <source>
    </source>
</evidence>
<evidence type="ECO:0000269" key="10">
    <source>
    </source>
</evidence>
<evidence type="ECO:0000269" key="11">
    <source>
    </source>
</evidence>
<evidence type="ECO:0000269" key="12">
    <source>
    </source>
</evidence>
<evidence type="ECO:0000269" key="13">
    <source>
    </source>
</evidence>
<evidence type="ECO:0000269" key="14">
    <source>
    </source>
</evidence>
<evidence type="ECO:0000269" key="15">
    <source>
    </source>
</evidence>
<evidence type="ECO:0000269" key="16">
    <source>
    </source>
</evidence>
<evidence type="ECO:0000269" key="17">
    <source>
    </source>
</evidence>
<evidence type="ECO:0000269" key="18">
    <source>
    </source>
</evidence>
<evidence type="ECO:0000303" key="19">
    <source>
    </source>
</evidence>
<evidence type="ECO:0000303" key="20">
    <source>
    </source>
</evidence>
<evidence type="ECO:0000305" key="21"/>
<accession>Q9P2K1</accession>
<accession>A6ND97</accession>
<accession>B3FW08</accession>
<accession>D6RB72</accession>
<accession>E7EP21</accession>
<accession>E9PEV5</accession>
<accession>Q3SYP3</accession>
<accession>Q9H8A7</accession>
<keyword id="KW-0025">Alternative splicing</keyword>
<keyword id="KW-0966">Cell projection</keyword>
<keyword id="KW-1186">Ciliopathy</keyword>
<keyword id="KW-0969">Cilium</keyword>
<keyword id="KW-0970">Cilium biogenesis/degradation</keyword>
<keyword id="KW-0175">Coiled coil</keyword>
<keyword id="KW-0963">Cytoplasm</keyword>
<keyword id="KW-0206">Cytoskeleton</keyword>
<keyword id="KW-0225">Disease variant</keyword>
<keyword id="KW-0979">Joubert syndrome</keyword>
<keyword id="KW-0981">Meckel syndrome</keyword>
<keyword id="KW-1267">Proteomics identification</keyword>
<keyword id="KW-1185">Reference proteome</keyword>
<keyword id="KW-0682">Retinitis pigmentosa</keyword>
<reference key="1">
    <citation type="journal article" date="2008" name="Am. J. Hum. Genet.">
        <title>Identification of CC2D2A as a Meckel syndrome gene adds an important piece to the ciliopathy puzzle.</title>
        <authorList>
            <person name="Tallila J."/>
            <person name="Jakkula E."/>
            <person name="Peltonen L."/>
            <person name="Salonen R."/>
            <person name="Kestilae M."/>
        </authorList>
    </citation>
    <scope>NUCLEOTIDE SEQUENCE [MRNA] (ISOFORM 1)</scope>
    <scope>FUNCTION</scope>
    <scope>INVOLVEMENT IN MKS6</scope>
</reference>
<reference key="2">
    <citation type="journal article" date="2000" name="DNA Res.">
        <title>Prediction of the coding sequences of unidentified human genes. XVI. The complete sequences of 150 new cDNA clones from brain which code for large proteins in vitro.</title>
        <authorList>
            <person name="Nagase T."/>
            <person name="Kikuno R."/>
            <person name="Ishikawa K."/>
            <person name="Hirosawa M."/>
            <person name="Ohara O."/>
        </authorList>
    </citation>
    <scope>NUCLEOTIDE SEQUENCE [LARGE SCALE MRNA] (ISOFORM 2)</scope>
    <source>
        <tissue>Brain</tissue>
    </source>
</reference>
<reference key="3">
    <citation type="journal article" date="2005" name="Nature">
        <title>Generation and annotation of the DNA sequences of human chromosomes 2 and 4.</title>
        <authorList>
            <person name="Hillier L.W."/>
            <person name="Graves T.A."/>
            <person name="Fulton R.S."/>
            <person name="Fulton L.A."/>
            <person name="Pepin K.H."/>
            <person name="Minx P."/>
            <person name="Wagner-McPherson C."/>
            <person name="Layman D."/>
            <person name="Wylie K."/>
            <person name="Sekhon M."/>
            <person name="Becker M.C."/>
            <person name="Fewell G.A."/>
            <person name="Delehaunty K.D."/>
            <person name="Miner T.L."/>
            <person name="Nash W.E."/>
            <person name="Kremitzki C."/>
            <person name="Oddy L."/>
            <person name="Du H."/>
            <person name="Sun H."/>
            <person name="Bradshaw-Cordum H."/>
            <person name="Ali J."/>
            <person name="Carter J."/>
            <person name="Cordes M."/>
            <person name="Harris A."/>
            <person name="Isak A."/>
            <person name="van Brunt A."/>
            <person name="Nguyen C."/>
            <person name="Du F."/>
            <person name="Courtney L."/>
            <person name="Kalicki J."/>
            <person name="Ozersky P."/>
            <person name="Abbott S."/>
            <person name="Armstrong J."/>
            <person name="Belter E.A."/>
            <person name="Caruso L."/>
            <person name="Cedroni M."/>
            <person name="Cotton M."/>
            <person name="Davidson T."/>
            <person name="Desai A."/>
            <person name="Elliott G."/>
            <person name="Erb T."/>
            <person name="Fronick C."/>
            <person name="Gaige T."/>
            <person name="Haakenson W."/>
            <person name="Haglund K."/>
            <person name="Holmes A."/>
            <person name="Harkins R."/>
            <person name="Kim K."/>
            <person name="Kruchowski S.S."/>
            <person name="Strong C.M."/>
            <person name="Grewal N."/>
            <person name="Goyea E."/>
            <person name="Hou S."/>
            <person name="Levy A."/>
            <person name="Martinka S."/>
            <person name="Mead K."/>
            <person name="McLellan M.D."/>
            <person name="Meyer R."/>
            <person name="Randall-Maher J."/>
            <person name="Tomlinson C."/>
            <person name="Dauphin-Kohlberg S."/>
            <person name="Kozlowicz-Reilly A."/>
            <person name="Shah N."/>
            <person name="Swearengen-Shahid S."/>
            <person name="Snider J."/>
            <person name="Strong J.T."/>
            <person name="Thompson J."/>
            <person name="Yoakum M."/>
            <person name="Leonard S."/>
            <person name="Pearman C."/>
            <person name="Trani L."/>
            <person name="Radionenko M."/>
            <person name="Waligorski J.E."/>
            <person name="Wang C."/>
            <person name="Rock S.M."/>
            <person name="Tin-Wollam A.-M."/>
            <person name="Maupin R."/>
            <person name="Latreille P."/>
            <person name="Wendl M.C."/>
            <person name="Yang S.-P."/>
            <person name="Pohl C."/>
            <person name="Wallis J.W."/>
            <person name="Spieth J."/>
            <person name="Bieri T.A."/>
            <person name="Berkowicz N."/>
            <person name="Nelson J.O."/>
            <person name="Osborne J."/>
            <person name="Ding L."/>
            <person name="Meyer R."/>
            <person name="Sabo A."/>
            <person name="Shotland Y."/>
            <person name="Sinha P."/>
            <person name="Wohldmann P.E."/>
            <person name="Cook L.L."/>
            <person name="Hickenbotham M.T."/>
            <person name="Eldred J."/>
            <person name="Williams D."/>
            <person name="Jones T.A."/>
            <person name="She X."/>
            <person name="Ciccarelli F.D."/>
            <person name="Izaurralde E."/>
            <person name="Taylor J."/>
            <person name="Schmutz J."/>
            <person name="Myers R.M."/>
            <person name="Cox D.R."/>
            <person name="Huang X."/>
            <person name="McPherson J.D."/>
            <person name="Mardis E.R."/>
            <person name="Clifton S.W."/>
            <person name="Warren W.C."/>
            <person name="Chinwalla A.T."/>
            <person name="Eddy S.R."/>
            <person name="Marra M.A."/>
            <person name="Ovcharenko I."/>
            <person name="Furey T.S."/>
            <person name="Miller W."/>
            <person name="Eichler E.E."/>
            <person name="Bork P."/>
            <person name="Suyama M."/>
            <person name="Torrents D."/>
            <person name="Waterston R.H."/>
            <person name="Wilson R.K."/>
        </authorList>
    </citation>
    <scope>NUCLEOTIDE SEQUENCE [LARGE SCALE GENOMIC DNA]</scope>
</reference>
<reference key="4">
    <citation type="submission" date="2005-07" db="EMBL/GenBank/DDBJ databases">
        <authorList>
            <person name="Mural R.J."/>
            <person name="Istrail S."/>
            <person name="Sutton G."/>
            <person name="Florea L."/>
            <person name="Halpern A.L."/>
            <person name="Mobarry C.M."/>
            <person name="Lippert R."/>
            <person name="Walenz B."/>
            <person name="Shatkay H."/>
            <person name="Dew I."/>
            <person name="Miller J.R."/>
            <person name="Flanigan M.J."/>
            <person name="Edwards N.J."/>
            <person name="Bolanos R."/>
            <person name="Fasulo D."/>
            <person name="Halldorsson B.V."/>
            <person name="Hannenhalli S."/>
            <person name="Turner R."/>
            <person name="Yooseph S."/>
            <person name="Lu F."/>
            <person name="Nusskern D.R."/>
            <person name="Shue B.C."/>
            <person name="Zheng X.H."/>
            <person name="Zhong F."/>
            <person name="Delcher A.L."/>
            <person name="Huson D.H."/>
            <person name="Kravitz S.A."/>
            <person name="Mouchard L."/>
            <person name="Reinert K."/>
            <person name="Remington K.A."/>
            <person name="Clark A.G."/>
            <person name="Waterman M.S."/>
            <person name="Eichler E.E."/>
            <person name="Adams M.D."/>
            <person name="Hunkapiller M.W."/>
            <person name="Myers E.W."/>
            <person name="Venter J.C."/>
        </authorList>
    </citation>
    <scope>NUCLEOTIDE SEQUENCE [LARGE SCALE GENOMIC DNA]</scope>
</reference>
<reference key="5">
    <citation type="journal article" date="2004" name="Genome Res.">
        <title>The status, quality, and expansion of the NIH full-length cDNA project: the Mammalian Gene Collection (MGC).</title>
        <authorList>
            <consortium name="The MGC Project Team"/>
        </authorList>
    </citation>
    <scope>NUCLEOTIDE SEQUENCE [LARGE SCALE MRNA] (ISOFORMS 3 AND 4)</scope>
    <scope>NUCLEOTIDE SEQUENCE [LARGE SCALE MRNA] OF 1-527 (ISOFORM 2)</scope>
    <source>
        <tissue>Uterus</tissue>
    </source>
</reference>
<reference key="6">
    <citation type="journal article" date="2004" name="Nat. Genet.">
        <title>Complete sequencing and characterization of 21,243 full-length human cDNAs.</title>
        <authorList>
            <person name="Ota T."/>
            <person name="Suzuki Y."/>
            <person name="Nishikawa T."/>
            <person name="Otsuki T."/>
            <person name="Sugiyama T."/>
            <person name="Irie R."/>
            <person name="Wakamatsu A."/>
            <person name="Hayashi K."/>
            <person name="Sato H."/>
            <person name="Nagai K."/>
            <person name="Kimura K."/>
            <person name="Makita H."/>
            <person name="Sekine M."/>
            <person name="Obayashi M."/>
            <person name="Nishi T."/>
            <person name="Shibahara T."/>
            <person name="Tanaka T."/>
            <person name="Ishii S."/>
            <person name="Yamamoto J."/>
            <person name="Saito K."/>
            <person name="Kawai Y."/>
            <person name="Isono Y."/>
            <person name="Nakamura Y."/>
            <person name="Nagahari K."/>
            <person name="Murakami K."/>
            <person name="Yasuda T."/>
            <person name="Iwayanagi T."/>
            <person name="Wagatsuma M."/>
            <person name="Shiratori A."/>
            <person name="Sudo H."/>
            <person name="Hosoiri T."/>
            <person name="Kaku Y."/>
            <person name="Kodaira H."/>
            <person name="Kondo H."/>
            <person name="Sugawara M."/>
            <person name="Takahashi M."/>
            <person name="Kanda K."/>
            <person name="Yokoi T."/>
            <person name="Furuya T."/>
            <person name="Kikkawa E."/>
            <person name="Omura Y."/>
            <person name="Abe K."/>
            <person name="Kamihara K."/>
            <person name="Katsuta N."/>
            <person name="Sato K."/>
            <person name="Tanikawa M."/>
            <person name="Yamazaki M."/>
            <person name="Ninomiya K."/>
            <person name="Ishibashi T."/>
            <person name="Yamashita H."/>
            <person name="Murakawa K."/>
            <person name="Fujimori K."/>
            <person name="Tanai H."/>
            <person name="Kimata M."/>
            <person name="Watanabe M."/>
            <person name="Hiraoka S."/>
            <person name="Chiba Y."/>
            <person name="Ishida S."/>
            <person name="Ono Y."/>
            <person name="Takiguchi S."/>
            <person name="Watanabe S."/>
            <person name="Yosida M."/>
            <person name="Hotuta T."/>
            <person name="Kusano J."/>
            <person name="Kanehori K."/>
            <person name="Takahashi-Fujii A."/>
            <person name="Hara H."/>
            <person name="Tanase T.-O."/>
            <person name="Nomura Y."/>
            <person name="Togiya S."/>
            <person name="Komai F."/>
            <person name="Hara R."/>
            <person name="Takeuchi K."/>
            <person name="Arita M."/>
            <person name="Imose N."/>
            <person name="Musashino K."/>
            <person name="Yuuki H."/>
            <person name="Oshima A."/>
            <person name="Sasaki N."/>
            <person name="Aotsuka S."/>
            <person name="Yoshikawa Y."/>
            <person name="Matsunawa H."/>
            <person name="Ichihara T."/>
            <person name="Shiohata N."/>
            <person name="Sano S."/>
            <person name="Moriya S."/>
            <person name="Momiyama H."/>
            <person name="Satoh N."/>
            <person name="Takami S."/>
            <person name="Terashima Y."/>
            <person name="Suzuki O."/>
            <person name="Nakagawa S."/>
            <person name="Senoh A."/>
            <person name="Mizoguchi H."/>
            <person name="Goto Y."/>
            <person name="Shimizu F."/>
            <person name="Wakebe H."/>
            <person name="Hishigaki H."/>
            <person name="Watanabe T."/>
            <person name="Sugiyama A."/>
            <person name="Takemoto M."/>
            <person name="Kawakami B."/>
            <person name="Yamazaki M."/>
            <person name="Watanabe K."/>
            <person name="Kumagai A."/>
            <person name="Itakura S."/>
            <person name="Fukuzumi Y."/>
            <person name="Fujimori Y."/>
            <person name="Komiyama M."/>
            <person name="Tashiro H."/>
            <person name="Tanigami A."/>
            <person name="Fujiwara T."/>
            <person name="Ono T."/>
            <person name="Yamada K."/>
            <person name="Fujii Y."/>
            <person name="Ozaki K."/>
            <person name="Hirao M."/>
            <person name="Ohmori Y."/>
            <person name="Kawabata A."/>
            <person name="Hikiji T."/>
            <person name="Kobatake N."/>
            <person name="Inagaki H."/>
            <person name="Ikema Y."/>
            <person name="Okamoto S."/>
            <person name="Okitani R."/>
            <person name="Kawakami T."/>
            <person name="Noguchi S."/>
            <person name="Itoh T."/>
            <person name="Shigeta K."/>
            <person name="Senba T."/>
            <person name="Matsumura K."/>
            <person name="Nakajima Y."/>
            <person name="Mizuno T."/>
            <person name="Morinaga M."/>
            <person name="Sasaki M."/>
            <person name="Togashi T."/>
            <person name="Oyama M."/>
            <person name="Hata H."/>
            <person name="Watanabe M."/>
            <person name="Komatsu T."/>
            <person name="Mizushima-Sugano J."/>
            <person name="Satoh T."/>
            <person name="Shirai Y."/>
            <person name="Takahashi Y."/>
            <person name="Nakagawa K."/>
            <person name="Okumura K."/>
            <person name="Nagase T."/>
            <person name="Nomura N."/>
            <person name="Kikuchi H."/>
            <person name="Masuho Y."/>
            <person name="Yamashita R."/>
            <person name="Nakai K."/>
            <person name="Yada T."/>
            <person name="Nakamura Y."/>
            <person name="Ohara O."/>
            <person name="Isogai T."/>
            <person name="Sugano S."/>
        </authorList>
    </citation>
    <scope>NUCLEOTIDE SEQUENCE [LARGE SCALE MRNA] OF 283-1620 (ISOFORMS 1/2)</scope>
    <source>
        <tissue>Thyroid</tissue>
    </source>
</reference>
<reference key="7">
    <citation type="journal article" date="2008" name="Am. J. Hum. Genet.">
        <title>CC2D2A, encoding a coiled-coil and C2 domain protein, causes autosomal-recessive mental retardation with retinitis pigmentosa.</title>
        <authorList>
            <person name="Noor A."/>
            <person name="Windpassinger C."/>
            <person name="Patel M."/>
            <person name="Stachowiak B."/>
            <person name="Mikhailov A."/>
            <person name="Azam M."/>
            <person name="Irfan M."/>
            <person name="Siddiqui Z.K."/>
            <person name="Naeem F."/>
            <person name="Paterson A.D."/>
            <person name="Lutfullah M."/>
            <person name="Vincent J.B."/>
            <person name="Ayub M."/>
        </authorList>
    </citation>
    <scope>TISSUE SPECIFICITY</scope>
    <scope>SUBCELLULAR LOCATION</scope>
    <scope>INVOLVEMENT IN JBTS9</scope>
</reference>
<reference key="8">
    <citation type="journal article" date="2008" name="Am. J. Hum. Genet.">
        <authorList>
            <person name="Noor A."/>
            <person name="Windpassinger C."/>
            <person name="Patel M."/>
            <person name="Stachowiak B."/>
            <person name="Mikhailov A."/>
            <person name="Azam M."/>
            <person name="Irfan M."/>
            <person name="Paterson A.D."/>
            <person name="Lutufullah M."/>
            <person name="Doherty D."/>
            <person name="Vincent J.B."/>
            <person name="Ayub M."/>
        </authorList>
    </citation>
    <scope>ERRATUM OF PUBMED:18387594</scope>
</reference>
<reference key="9">
    <citation type="journal article" date="2009" name="Hum. Mutat.">
        <title>CC2D2A mutations in Meckel and Joubert syndromes indicate a genotype-phenotype correlation.</title>
        <authorList>
            <person name="Mougou-Zerelli S."/>
            <person name="Thomas S."/>
            <person name="Szenker E."/>
            <person name="Audollent S."/>
            <person name="Elkhartoufi N."/>
            <person name="Babarit C."/>
            <person name="Romano S."/>
            <person name="Salomon R."/>
            <person name="Amiel J."/>
            <person name="Esculpavit C."/>
            <person name="Gonzales M."/>
            <person name="Escudier E."/>
            <person name="Leheup B."/>
            <person name="Loget P."/>
            <person name="Odent S."/>
            <person name="Roume J."/>
            <person name="Gerard M."/>
            <person name="Delezoide A.-L."/>
            <person name="Khung S."/>
            <person name="Patrier S."/>
            <person name="Cordier M.-P."/>
            <person name="Bouvier R."/>
            <person name="Martinovic J."/>
            <person name="Gubler M.-C."/>
            <person name="Boddaert N."/>
            <person name="Munnich A."/>
            <person name="Encha-Razavi F."/>
            <person name="Valente E.M."/>
            <person name="Saad A."/>
            <person name="Saunier S."/>
            <person name="Vekemans M."/>
            <person name="Attie-Bitach T."/>
        </authorList>
    </citation>
    <scope>DEVELOPMENTAL STAGE</scope>
    <scope>VARIANTS JBTS9 SER-721; MET-1114 AND VAL-1556</scope>
    <scope>VARIANT GLU-800</scope>
</reference>
<reference key="10">
    <citation type="journal article" date="2008" name="Am. J. Hum. Genet.">
        <title>CC2D2A is mutated in Joubert syndrome and interacts with the ciliopathy-associated basal body protein CEP290.</title>
        <authorList>
            <person name="Gorden N.T."/>
            <person name="Arts H.H."/>
            <person name="Parisi M.A."/>
            <person name="Coene K.L.M."/>
            <person name="Letteboer S.J.F."/>
            <person name="van Beersum S.E.C."/>
            <person name="Mans D.A."/>
            <person name="Hikida A."/>
            <person name="Eckert M."/>
            <person name="Knutzen D."/>
            <person name="Alswaid A.F."/>
            <person name="Oezyurek H."/>
            <person name="Dibooglu S."/>
            <person name="Otto E.A."/>
            <person name="Liu Y."/>
            <person name="Davis E.E."/>
            <person name="Hutter C.M."/>
            <person name="Bammler T.K."/>
            <person name="Farin F.M."/>
            <person name="Dorschner M."/>
            <person name="Topcu M."/>
            <person name="Zackai E.H."/>
            <person name="Rosenthal P."/>
            <person name="Owens K.N."/>
            <person name="Katsanis N."/>
            <person name="Vincent J.B."/>
            <person name="Hildebrandt F."/>
            <person name="Rubel E.W."/>
            <person name="Raible D.W."/>
            <person name="Knoers N.V.A.M."/>
            <person name="Chance P.F."/>
            <person name="Roepman R."/>
            <person name="Moens C.B."/>
            <person name="Glass I.A."/>
            <person name="Doherty D."/>
        </authorList>
    </citation>
    <scope>VARIANTS JBTS9 HIS-1096; SER-1122; CYS-1528 AND PRO-1551</scope>
    <scope>TISSUE SPECIFICITY</scope>
    <scope>SUBCELLULAR LOCATION</scope>
    <scope>INTERACTION WITH CEP290</scope>
</reference>
<reference key="11">
    <citation type="journal article" date="2009" name="Hum. Mutat.">
        <title>Mutation spectrum of Meckel syndrome genes: one group of syndromes or several distinct groups?</title>
        <authorList>
            <person name="Tallila J."/>
            <person name="Salonen R."/>
            <person name="Kohlschmidt N."/>
            <person name="Peltonen L."/>
            <person name="Kestilae M."/>
        </authorList>
    </citation>
    <scope>VARIANT MKS6 MET-1114</scope>
</reference>
<reference key="12">
    <citation type="journal article" date="2010" name="J. Med. Genet.">
        <title>Mutations in 3 genes (MKS3, CC2D2A and RPGRIP1L) cause COACH syndrome (Joubert syndrome with congenital hepatic fibrosis).</title>
        <authorList>
            <person name="Doherty D."/>
            <person name="Parisi M.A."/>
            <person name="Finn L.S."/>
            <person name="Gunay-Aygun M."/>
            <person name="Al-Mateen M."/>
            <person name="Bates D."/>
            <person name="Clericuzio C."/>
            <person name="Demir H."/>
            <person name="Dorschner M."/>
            <person name="van Essen A.J."/>
            <person name="Gahl W.A."/>
            <person name="Gentile M."/>
            <person name="Gorden N.T."/>
            <person name="Hikida A."/>
            <person name="Knutzen D."/>
            <person name="Ozyurek H."/>
            <person name="Phelps I."/>
            <person name="Rosenthal P."/>
            <person name="Verloes A."/>
            <person name="Weigand H."/>
            <person name="Chance P.F."/>
            <person name="Dobyns W.B."/>
            <person name="Glass I.A."/>
        </authorList>
    </citation>
    <scope>VARIANTS COACH2 MET-1116 AND CYS-1528</scope>
</reference>
<reference key="13">
    <citation type="journal article" date="2012" name="Am. J. Hum. Genet.">
        <title>Mutations in C5ORF42 cause Joubert syndrome in the French Canadian population.</title>
        <authorList>
            <person name="Srour M."/>
            <person name="Schwartzentruber J."/>
            <person name="Hamdan F.F."/>
            <person name="Ospina L.H."/>
            <person name="Patry L."/>
            <person name="Labuda D."/>
            <person name="Massicotte C."/>
            <person name="Dobrzeniecka S."/>
            <person name="Capo-Chichi J.M."/>
            <person name="Papillon-Cavanagh S."/>
            <person name="Samuels M.E."/>
            <person name="Boycott K.M."/>
            <person name="Shevell M.I."/>
            <person name="Laframboise R."/>
            <person name="Desilets V."/>
            <person name="Maranda B."/>
            <person name="Rouleau G.A."/>
            <person name="Majewski J."/>
            <person name="Michaud J.L."/>
        </authorList>
    </citation>
    <scope>VARIANTS JBTS9 LYS-1126 AND VAL-1556</scope>
</reference>
<reference key="14">
    <citation type="journal article" date="2012" name="J. Med. Genet.">
        <title>Genotype-phenotype correlation in CC2D2A-related Joubert syndrome reveals an association with ventriculomegaly and seizures.</title>
        <authorList>
            <person name="Bachmann-Gagescu R."/>
            <person name="Ishak G.E."/>
            <person name="Dempsey J.C."/>
            <person name="Adkins J."/>
            <person name="O'Day D."/>
            <person name="Phelps I.G."/>
            <person name="Gunay-Aygun M."/>
            <person name="Kline A.D."/>
            <person name="Szczaluba K."/>
            <person name="Martorell L."/>
            <person name="Alswaid A."/>
            <person name="Alrasheed S."/>
            <person name="Pai S."/>
            <person name="Izatt L."/>
            <person name="Ronan A."/>
            <person name="Parisi M.A."/>
            <person name="Mefford H."/>
            <person name="Glass I."/>
            <person name="Doherty D."/>
        </authorList>
    </citation>
    <scope>VARIANTS JBTS9 ARG-117; GLU-507; PRO-559; ALA-1045; HIS-1096; MET-1116; SER-1122; ALA-1151; CYS-1284; HIS-1284; GLN-1330; ALA-1430; CYS-1528 AND VAL-1556</scope>
    <scope>VARIANTS ILE-660; ILE-684 AND VAL-701</scope>
</reference>
<reference key="15">
    <citation type="journal article" date="2012" name="J. Med. Genet.">
        <title>Mutations in TMEM231 cause Joubert syndrome in French Canadians.</title>
        <authorList>
            <consortium name="FORGE Canada Consortium"/>
            <person name="Srour M."/>
            <person name="Hamdan F.F."/>
            <person name="Schwartzentruber J.A."/>
            <person name="Patry L."/>
            <person name="Ospina L.H."/>
            <person name="Shevell M.I."/>
            <person name="Desilets V."/>
            <person name="Dobrzeniecka S."/>
            <person name="Mathonnet G."/>
            <person name="Lemyre E."/>
            <person name="Massicotte C."/>
            <person name="Labuda D."/>
            <person name="Amrom D."/>
            <person name="Andermann E."/>
            <person name="Sebire G."/>
            <person name="Maranda B."/>
            <person name="Rouleau G.A."/>
            <person name="Majewski J."/>
            <person name="Michaud J.L."/>
        </authorList>
    </citation>
    <scope>VARIANTS JBTS9 LYS-1126; SER-1520; VAL-1556 AND HIS-1568</scope>
</reference>
<reference key="16">
    <citation type="journal article" date="2012" name="Nat. Genet.">
        <title>CEP41 is mutated in Joubert syndrome and is required for tubulin glutamylation at the cilium.</title>
        <authorList>
            <person name="Lee J.E."/>
            <person name="Silhavy J.L."/>
            <person name="Zaki M.S."/>
            <person name="Schroth J."/>
            <person name="Bielas S.L."/>
            <person name="Marsh S.E."/>
            <person name="Olvera J."/>
            <person name="Brancati F."/>
            <person name="Iannicelli M."/>
            <person name="Ikegami K."/>
            <person name="Schlossman A.M."/>
            <person name="Merriman B."/>
            <person name="Attie-Bitach T."/>
            <person name="Logan C.V."/>
            <person name="Glass I.A."/>
            <person name="Cluckey A."/>
            <person name="Louie C.M."/>
            <person name="Lee J.H."/>
            <person name="Raynes H.R."/>
            <person name="Rapin I."/>
            <person name="Castroviejo I.P."/>
            <person name="Setou M."/>
            <person name="Barbot C."/>
            <person name="Boltshauser E."/>
            <person name="Nelson S.F."/>
            <person name="Hildebrandt F."/>
            <person name="Johnson C.A."/>
            <person name="Doherty D.A."/>
            <person name="Valente E.M."/>
            <person name="Gleeson J.G."/>
        </authorList>
    </citation>
    <scope>VARIANT JBTS9 ALA-1447</scope>
</reference>
<reference key="17">
    <citation type="journal article" date="2014" name="Ultrasound Obstet. Gynecol.">
        <title>First-trimester diagnosis of Meckel-Gruber syndrome by fetal ultrasound with molecular identification of CC2D2A mutations by next-generation sequencing.</title>
        <authorList>
            <person name="Jones D."/>
            <person name="Fiozzo F."/>
            <person name="Waters B."/>
            <person name="McKnight D."/>
            <person name="Brown S."/>
        </authorList>
    </citation>
    <scope>VARIANT MKS6 SER-1517</scope>
</reference>
<reference key="18">
    <citation type="journal article" date="2015" name="Am. J. Hum. Genet.">
        <title>Joubert Syndrome in French Canadians and Identification of Mutations in CEP104.</title>
        <authorList>
            <consortium name="Care4Rare Canada Consortium"/>
            <person name="Srour M."/>
            <person name="Hamdan F.F."/>
            <person name="McKnight D."/>
            <person name="Davis E."/>
            <person name="Mandel H."/>
            <person name="Schwartzentruber J."/>
            <person name="Martin B."/>
            <person name="Patry L."/>
            <person name="Nassif C."/>
            <person name="Dionne-Laporte A."/>
            <person name="Ospina L.H."/>
            <person name="Lemyre E."/>
            <person name="Massicotte C."/>
            <person name="Laframboise R."/>
            <person name="Maranda B."/>
            <person name="Labuda D."/>
            <person name="Decarie J.C."/>
            <person name="Rypens F."/>
            <person name="Goldsher D."/>
            <person name="Fallet-Bianco C."/>
            <person name="Soucy J.F."/>
            <person name="Laberge A.M."/>
            <person name="Maftei C."/>
            <person name="Boycott K."/>
            <person name="Brais B."/>
            <person name="Boucher R.M."/>
            <person name="Rouleau G.A."/>
            <person name="Katsanis N."/>
            <person name="Majewski J."/>
            <person name="Elpeleg O."/>
            <person name="Kukolich M.K."/>
            <person name="Shalev S."/>
            <person name="Michaud J.L."/>
        </authorList>
    </citation>
    <scope>VARIANTS JBTS9 LYS-1126; SER-1520; VAL-1556 AND HIS-1568</scope>
</reference>
<reference key="19">
    <citation type="journal article" date="2019" name="Clin. Genet.">
        <title>Whole exome sequencing resolves complex phenotype and identifies CC2D2A mutations underlying non-syndromic rod-cone dystrophy.</title>
        <authorList>
            <person name="Mejecase C."/>
            <person name="Hummel A."/>
            <person name="Mohand-Said S."/>
            <person name="Andrieu C."/>
            <person name="El Shamieh S."/>
            <person name="Antonio A."/>
            <person name="Condroyer C."/>
            <person name="Boyard F."/>
            <person name="Foussard M."/>
            <person name="Blanchard S."/>
            <person name="Letexier M."/>
            <person name="Saraiva J.P."/>
            <person name="Sahel J.A."/>
            <person name="Zeitz C."/>
            <person name="Audo I."/>
        </authorList>
    </citation>
    <scope>INVOLVEMENT IN RP93</scope>
    <scope>VARIANT RP93 PRO-925</scope>
</reference>
<reference key="20">
    <citation type="journal article" date="2019" name="Clin. Genet.">
        <title>Meckel syndrome: Clinical and mutation profile in six fetuses.</title>
        <authorList>
            <person name="Radhakrishnan P."/>
            <person name="Nayak S.S."/>
            <person name="Shukla A."/>
            <person name="Lindstrand A."/>
            <person name="Girisha K.M."/>
        </authorList>
    </citation>
    <scope>VARIANTS MKS6 VAL-1363 AND GLY-1519</scope>
</reference>
<proteinExistence type="evidence at protein level"/>
<name>C2D2A_HUMAN</name>
<comment type="function">
    <text evidence="1 6">Component of the tectonic-like complex, a complex localized at the transition zone of primary cilia and acting as a barrier that prevents diffusion of transmembrane proteins between the cilia and plasma membranes. Required for ciliogenesis and sonic hedgehog/SHH signaling (By similarity).</text>
</comment>
<comment type="subunit">
    <text evidence="1">Part of the tectonic-like complex (also named B9 complex).</text>
</comment>
<comment type="subcellular location">
    <subcellularLocation>
        <location>Cytoplasm</location>
    </subcellularLocation>
    <subcellularLocation>
        <location>Cytoplasm</location>
        <location>Cytoskeleton</location>
        <location>Cilium basal body</location>
    </subcellularLocation>
    <text evidence="1">Localizes at the transition zone, a region between the basal body and the ciliary axoneme.</text>
</comment>
<comment type="alternative products">
    <event type="alternative splicing"/>
    <isoform>
        <id>Q9P2K1-4</id>
        <name>1</name>
        <sequence type="displayed"/>
    </isoform>
    <isoform>
        <id>Q9P2K1-2</id>
        <name>2</name>
        <sequence type="described" ref="VSP_030923 VSP_037223"/>
    </isoform>
    <isoform>
        <id>Q9P2K1-5</id>
        <name>3</name>
        <sequence type="described" ref="VSP_045255 VSP_045256"/>
    </isoform>
    <isoform>
        <id>Q9P2K1-6</id>
        <name>4</name>
        <sequence type="described" ref="VSP_045453 VSP_045454"/>
    </isoform>
</comment>
<comment type="tissue specificity">
    <text evidence="5 7">Strongly expressed in prostate, pancreas, kidney, lung, liver, retina, kidney, fetal brain and fetal kidney. Lower expression in spleen, small intestine, colon, skeletal muscle, ovary, thymus and heart.</text>
</comment>
<comment type="developmental stage">
    <text evidence="10">At Carnagie stage 13 (CS13, after 4 weeks of development) and CS14 CC2D2A is ubiquitously expressed, with a distinct signal in the spinal cord and limb buds. At CS17 CC2D2A continue to be widely expressedin particular throughout the central nervous system (CNS), lung, and digestive tract epithelia. At CS22 expression continues to be intense within the CNS, where strong and specific expression is observed in the eye and in external granular layer of cerebellum. CC2D2A expression is also observed in the costal perichondrium.</text>
</comment>
<comment type="disease" evidence="6 8 15 18">
    <disease id="DI-00704">
        <name>Meckel syndrome 6</name>
        <acronym>MKS6</acronym>
        <description>A disorder characterized by a combination of renal cysts and variably associated features including developmental anomalies of the central nervous system (typically encephalocele), hepatic ductal dysplasia and cysts, and polydactyly.</description>
        <dbReference type="MIM" id="612284"/>
    </disease>
    <text>The disease is caused by variants affecting the gene represented in this entry.</text>
</comment>
<comment type="disease" evidence="5 7 10 11 12 13 14 16">
    <disease id="DI-00612">
        <name>Joubert syndrome 9</name>
        <acronym>JBTS9</acronym>
        <description>A disorder presenting with cerebellar ataxia, oculomotor apraxia, hypotonia, neonatal breathing abnormalities and psychomotor delay. Neuroradiologically, it is characterized by cerebellar vermian hypoplasia/aplasia, thickened and reoriented superior cerebellar peduncles, and an abnormally large interpeduncular fossa, giving the appearance of a molar tooth on transaxial slices (molar tooth sign). Additional variable features include retinal dystrophy and renal disease.</description>
        <dbReference type="MIM" id="612285"/>
    </disease>
    <text>The disease is caused by variants affecting the gene represented in this entry.</text>
</comment>
<comment type="disease" evidence="9">
    <disease id="DI-05978">
        <name>COACH syndrome 2</name>
        <acronym>COACH2</acronym>
        <description>A form of COACH syndrome, a disorder characterized by cerebellar vermis hypoplasia, developmental delay, impaired intellectual development, ataxia, and hepatic fibrosis. Patients present the molar tooth sign, a midbrain-hindbrain malformation pathognomonic for Joubert syndrome and related disorders. Other features, such as coloboma and renal cysts, may be variable. COACH2 inheritance is autosomal recessive.</description>
        <dbReference type="MIM" id="619111"/>
    </disease>
    <text>The disease is caused by variants affecting the gene represented in this entry.</text>
</comment>
<comment type="disease" evidence="17">
    <disease id="DI-06401">
        <name>Retinitis pigmentosa 93</name>
        <acronym>RP93</acronym>
        <description>A form of retinitis pigmentosa, a retinal dystrophy belonging to the group of pigmentary retinopathies. Retinitis pigmentosa is characterized by retinal pigment deposits visible on fundus examination and primary loss of rod photoreceptor cells followed by secondary loss of cone photoreceptors. Patients typically have night vision blindness and loss of midperipheral visual field. RP93 is an autosomal recessive, mild to moderate form, with onset in the second or third decade of life.</description>
        <dbReference type="MIM" id="619845"/>
    </disease>
    <text>The disease is caused by variants affecting the gene represented in this entry.</text>
</comment>
<comment type="sequence caution" evidence="21">
    <conflict type="miscellaneous discrepancy">
        <sequence resource="EMBL-CDS" id="AAI03711"/>
    </conflict>
    <text>Contaminating sequence. Potential poly-A sequence.</text>
</comment>
<comment type="sequence caution" evidence="21">
    <conflict type="erroneous initiation">
        <sequence resource="EMBL-CDS" id="BAA92583"/>
    </conflict>
    <text>Truncated N-terminus.</text>
</comment>
<comment type="sequence caution" evidence="21">
    <conflict type="miscellaneous discrepancy">
        <sequence resource="EMBL-CDS" id="BAB14710"/>
    </conflict>
    <text>Aberrant splicing.</text>
</comment>
<dbReference type="EMBL" id="EU450799">
    <property type="protein sequence ID" value="ACC96081.1"/>
    <property type="molecule type" value="mRNA"/>
</dbReference>
<dbReference type="EMBL" id="AB037766">
    <property type="protein sequence ID" value="BAA92583.1"/>
    <property type="status" value="ALT_INIT"/>
    <property type="molecule type" value="mRNA"/>
</dbReference>
<dbReference type="EMBL" id="AC007016">
    <property type="status" value="NOT_ANNOTATED_CDS"/>
    <property type="molecule type" value="Genomic_DNA"/>
</dbReference>
<dbReference type="EMBL" id="AC116651">
    <property type="status" value="NOT_ANNOTATED_CDS"/>
    <property type="molecule type" value="Genomic_DNA"/>
</dbReference>
<dbReference type="EMBL" id="CH471069">
    <property type="protein sequence ID" value="EAW92734.1"/>
    <property type="molecule type" value="Genomic_DNA"/>
</dbReference>
<dbReference type="EMBL" id="BC053865">
    <property type="status" value="NOT_ANNOTATED_CDS"/>
    <property type="molecule type" value="mRNA"/>
</dbReference>
<dbReference type="EMBL" id="BC070395">
    <property type="status" value="NOT_ANNOTATED_CDS"/>
    <property type="molecule type" value="mRNA"/>
</dbReference>
<dbReference type="EMBL" id="BC103710">
    <property type="protein sequence ID" value="AAI03711.1"/>
    <property type="status" value="ALT_SEQ"/>
    <property type="molecule type" value="mRNA"/>
</dbReference>
<dbReference type="EMBL" id="AK023876">
    <property type="protein sequence ID" value="BAB14710.1"/>
    <property type="status" value="ALT_SEQ"/>
    <property type="molecule type" value="mRNA"/>
</dbReference>
<dbReference type="CCDS" id="CCDS47026.1">
    <molecule id="Q9P2K1-4"/>
</dbReference>
<dbReference type="CCDS" id="CCDS47027.2">
    <molecule id="Q9P2K1-5"/>
</dbReference>
<dbReference type="CCDS" id="CCDS54744.1">
    <molecule id="Q9P2K1-6"/>
</dbReference>
<dbReference type="RefSeq" id="NP_001073991.2">
    <molecule id="Q9P2K1-4"/>
    <property type="nucleotide sequence ID" value="NM_001080522.2"/>
</dbReference>
<dbReference type="RefSeq" id="NP_001158192.1">
    <molecule id="Q9P2K1-6"/>
    <property type="nucleotide sequence ID" value="NM_001164720.3"/>
</dbReference>
<dbReference type="RefSeq" id="NP_001365544.1">
    <molecule id="Q9P2K1-4"/>
    <property type="nucleotide sequence ID" value="NM_001378615.1"/>
</dbReference>
<dbReference type="RefSeq" id="NP_065836.2">
    <molecule id="Q9P2K1-5"/>
    <property type="nucleotide sequence ID" value="NM_020785.2"/>
</dbReference>
<dbReference type="RefSeq" id="XP_005248234.1">
    <property type="nucleotide sequence ID" value="XM_005248177.1"/>
</dbReference>
<dbReference type="RefSeq" id="XP_011512176.1">
    <molecule id="Q9P2K1-6"/>
    <property type="nucleotide sequence ID" value="XM_011513874.3"/>
</dbReference>
<dbReference type="RefSeq" id="XP_054206567.1">
    <molecule id="Q9P2K1-6"/>
    <property type="nucleotide sequence ID" value="XM_054350592.1"/>
</dbReference>
<dbReference type="SMR" id="Q9P2K1"/>
<dbReference type="BioGRID" id="121603">
    <property type="interactions" value="44"/>
</dbReference>
<dbReference type="ComplexPortal" id="CPX-2531">
    <property type="entry name" value="MKS transition zone complex"/>
</dbReference>
<dbReference type="CORUM" id="Q9P2K1"/>
<dbReference type="FunCoup" id="Q9P2K1">
    <property type="interactions" value="182"/>
</dbReference>
<dbReference type="IntAct" id="Q9P2K1">
    <property type="interactions" value="38"/>
</dbReference>
<dbReference type="STRING" id="9606.ENSP00000403465"/>
<dbReference type="GlyGen" id="Q9P2K1">
    <property type="glycosylation" value="3 sites, 1 O-linked glycan (2 sites)"/>
</dbReference>
<dbReference type="iPTMnet" id="Q9P2K1"/>
<dbReference type="PhosphoSitePlus" id="Q9P2K1"/>
<dbReference type="BioMuta" id="CC2D2A"/>
<dbReference type="DMDM" id="229462975"/>
<dbReference type="jPOST" id="Q9P2K1"/>
<dbReference type="MassIVE" id="Q9P2K1"/>
<dbReference type="PaxDb" id="9606-ENSP00000403465"/>
<dbReference type="PeptideAtlas" id="Q9P2K1"/>
<dbReference type="ProteomicsDB" id="13547"/>
<dbReference type="ProteomicsDB" id="17269"/>
<dbReference type="ProteomicsDB" id="83826">
    <molecule id="Q9P2K1-4"/>
</dbReference>
<dbReference type="ProteomicsDB" id="83827">
    <molecule id="Q9P2K1-2"/>
</dbReference>
<dbReference type="Pumba" id="Q9P2K1"/>
<dbReference type="Antibodypedia" id="50288">
    <property type="antibodies" value="29 antibodies from 15 providers"/>
</dbReference>
<dbReference type="DNASU" id="57545"/>
<dbReference type="Ensembl" id="ENST00000424120.6">
    <molecule id="Q9P2K1-4"/>
    <property type="protein sequence ID" value="ENSP00000403465.1"/>
    <property type="gene ID" value="ENSG00000048342.18"/>
</dbReference>
<dbReference type="Ensembl" id="ENST00000503292.6">
    <molecule id="Q9P2K1-4"/>
    <property type="protein sequence ID" value="ENSP00000421809.1"/>
    <property type="gene ID" value="ENSG00000048342.18"/>
</dbReference>
<dbReference type="Ensembl" id="ENST00000503658.2">
    <molecule id="Q9P2K1-5"/>
    <property type="protein sequence ID" value="ENSP00000426846.1"/>
    <property type="gene ID" value="ENSG00000048342.18"/>
</dbReference>
<dbReference type="Ensembl" id="ENST00000507954.5">
    <molecule id="Q9P2K1-6"/>
    <property type="protein sequence ID" value="ENSP00000427221.1"/>
    <property type="gene ID" value="ENSG00000048342.18"/>
</dbReference>
<dbReference type="Ensembl" id="ENST00000515124.6">
    <molecule id="Q9P2K1-6"/>
    <property type="protein sequence ID" value="ENSP00000424368.1"/>
    <property type="gene ID" value="ENSG00000048342.18"/>
</dbReference>
<dbReference type="Ensembl" id="ENST00000674945.1">
    <molecule id="Q9P2K1-2"/>
    <property type="protein sequence ID" value="ENSP00000502333.1"/>
    <property type="gene ID" value="ENSG00000048342.18"/>
</dbReference>
<dbReference type="GeneID" id="57545"/>
<dbReference type="KEGG" id="hsa:57545"/>
<dbReference type="MANE-Select" id="ENST00000424120.6">
    <property type="protein sequence ID" value="ENSP00000403465.1"/>
    <property type="RefSeq nucleotide sequence ID" value="NM_001378615.1"/>
    <property type="RefSeq protein sequence ID" value="NP_001365544.1"/>
</dbReference>
<dbReference type="UCSC" id="uc003gnq.5">
    <molecule id="Q9P2K1-4"/>
    <property type="organism name" value="human"/>
</dbReference>
<dbReference type="AGR" id="HGNC:29253"/>
<dbReference type="CTD" id="57545"/>
<dbReference type="DisGeNET" id="57545"/>
<dbReference type="GeneCards" id="CC2D2A"/>
<dbReference type="GeneReviews" id="CC2D2A"/>
<dbReference type="HGNC" id="HGNC:29253">
    <property type="gene designation" value="CC2D2A"/>
</dbReference>
<dbReference type="HPA" id="ENSG00000048342">
    <property type="expression patterns" value="Tissue enhanced (retina)"/>
</dbReference>
<dbReference type="MalaCards" id="CC2D2A"/>
<dbReference type="MIM" id="612013">
    <property type="type" value="gene"/>
</dbReference>
<dbReference type="MIM" id="612284">
    <property type="type" value="phenotype"/>
</dbReference>
<dbReference type="MIM" id="612285">
    <property type="type" value="phenotype"/>
</dbReference>
<dbReference type="MIM" id="619111">
    <property type="type" value="phenotype"/>
</dbReference>
<dbReference type="MIM" id="619845">
    <property type="type" value="phenotype"/>
</dbReference>
<dbReference type="neXtProt" id="NX_Q9P2K1"/>
<dbReference type="OpenTargets" id="ENSG00000048342"/>
<dbReference type="Orphanet" id="1454">
    <property type="disease" value="Joubert syndrome with hepatic defect"/>
</dbReference>
<dbReference type="Orphanet" id="2318">
    <property type="disease" value="Joubert syndrome with oculorenal defect"/>
</dbReference>
<dbReference type="Orphanet" id="564">
    <property type="disease" value="Meckel syndrome"/>
</dbReference>
<dbReference type="Orphanet" id="791">
    <property type="disease" value="Retinitis pigmentosa"/>
</dbReference>
<dbReference type="PharmGKB" id="PA162381194"/>
<dbReference type="VEuPathDB" id="HostDB:ENSG00000048342"/>
<dbReference type="eggNOG" id="KOG3639">
    <property type="taxonomic scope" value="Eukaryota"/>
</dbReference>
<dbReference type="GeneTree" id="ENSGT00940000155482"/>
<dbReference type="HOGENOM" id="CLU_164860_0_0_1"/>
<dbReference type="InParanoid" id="Q9P2K1"/>
<dbReference type="OMA" id="NADNIWF"/>
<dbReference type="OrthoDB" id="2162143at2759"/>
<dbReference type="PAN-GO" id="Q9P2K1">
    <property type="GO annotations" value="3 GO annotations based on evolutionary models"/>
</dbReference>
<dbReference type="PhylomeDB" id="Q9P2K1"/>
<dbReference type="TreeFam" id="TF324786"/>
<dbReference type="PathwayCommons" id="Q9P2K1"/>
<dbReference type="Reactome" id="R-HSA-5620912">
    <property type="pathway name" value="Anchoring of the basal body to the plasma membrane"/>
</dbReference>
<dbReference type="SignaLink" id="Q9P2K1"/>
<dbReference type="BioGRID-ORCS" id="57545">
    <property type="hits" value="9 hits in 1148 CRISPR screens"/>
</dbReference>
<dbReference type="ChiTaRS" id="CC2D2A">
    <property type="organism name" value="human"/>
</dbReference>
<dbReference type="GeneWiki" id="CC2D2A"/>
<dbReference type="GenomeRNAi" id="57545"/>
<dbReference type="Pharos" id="Q9P2K1">
    <property type="development level" value="Tbio"/>
</dbReference>
<dbReference type="PRO" id="PR:Q9P2K1"/>
<dbReference type="Proteomes" id="UP000005640">
    <property type="component" value="Chromosome 4"/>
</dbReference>
<dbReference type="RNAct" id="Q9P2K1">
    <property type="molecule type" value="protein"/>
</dbReference>
<dbReference type="Bgee" id="ENSG00000048342">
    <property type="expression patterns" value="Expressed in right uterine tube and 172 other cell types or tissues"/>
</dbReference>
<dbReference type="ExpressionAtlas" id="Q9P2K1">
    <property type="expression patterns" value="baseline and differential"/>
</dbReference>
<dbReference type="GO" id="GO:0035869">
    <property type="term" value="C:ciliary transition zone"/>
    <property type="evidence" value="ECO:0000250"/>
    <property type="project" value="UniProtKB"/>
</dbReference>
<dbReference type="GO" id="GO:0005856">
    <property type="term" value="C:cytoskeleton"/>
    <property type="evidence" value="ECO:0007669"/>
    <property type="project" value="UniProtKB-KW"/>
</dbReference>
<dbReference type="GO" id="GO:0005829">
    <property type="term" value="C:cytosol"/>
    <property type="evidence" value="ECO:0000304"/>
    <property type="project" value="Reactome"/>
</dbReference>
<dbReference type="GO" id="GO:0036038">
    <property type="term" value="C:MKS complex"/>
    <property type="evidence" value="ECO:0000250"/>
    <property type="project" value="UniProtKB"/>
</dbReference>
<dbReference type="GO" id="GO:0035082">
    <property type="term" value="P:axoneme assembly"/>
    <property type="evidence" value="ECO:0007669"/>
    <property type="project" value="Ensembl"/>
</dbReference>
<dbReference type="GO" id="GO:0043010">
    <property type="term" value="P:camera-type eye development"/>
    <property type="evidence" value="ECO:0007669"/>
    <property type="project" value="Ensembl"/>
</dbReference>
<dbReference type="GO" id="GO:0060271">
    <property type="term" value="P:cilium assembly"/>
    <property type="evidence" value="ECO:0000250"/>
    <property type="project" value="UniProtKB"/>
</dbReference>
<dbReference type="GO" id="GO:0007368">
    <property type="term" value="P:determination of left/right symmetry"/>
    <property type="evidence" value="ECO:0007669"/>
    <property type="project" value="Ensembl"/>
</dbReference>
<dbReference type="GO" id="GO:1990403">
    <property type="term" value="P:embryonic brain development"/>
    <property type="evidence" value="ECO:0007669"/>
    <property type="project" value="Ensembl"/>
</dbReference>
<dbReference type="GO" id="GO:0007507">
    <property type="term" value="P:heart development"/>
    <property type="evidence" value="ECO:0007669"/>
    <property type="project" value="Ensembl"/>
</dbReference>
<dbReference type="GO" id="GO:0001822">
    <property type="term" value="P:kidney development"/>
    <property type="evidence" value="ECO:0007669"/>
    <property type="project" value="Ensembl"/>
</dbReference>
<dbReference type="GO" id="GO:0044458">
    <property type="term" value="P:motile cilium assembly"/>
    <property type="evidence" value="ECO:0007669"/>
    <property type="project" value="Ensembl"/>
</dbReference>
<dbReference type="GO" id="GO:0001843">
    <property type="term" value="P:neural tube closure"/>
    <property type="evidence" value="ECO:0007669"/>
    <property type="project" value="Ensembl"/>
</dbReference>
<dbReference type="GO" id="GO:1905515">
    <property type="term" value="P:non-motile cilium assembly"/>
    <property type="evidence" value="ECO:0000318"/>
    <property type="project" value="GO_Central"/>
</dbReference>
<dbReference type="GO" id="GO:1904491">
    <property type="term" value="P:protein localization to ciliary transition zone"/>
    <property type="evidence" value="ECO:0000318"/>
    <property type="project" value="GO_Central"/>
</dbReference>
<dbReference type="GO" id="GO:0007224">
    <property type="term" value="P:smoothened signaling pathway"/>
    <property type="evidence" value="ECO:0000250"/>
    <property type="project" value="UniProtKB"/>
</dbReference>
<dbReference type="Gene3D" id="2.60.40.150">
    <property type="entry name" value="C2 domain"/>
    <property type="match status" value="1"/>
</dbReference>
<dbReference type="InterPro" id="IPR000008">
    <property type="entry name" value="C2_dom"/>
</dbReference>
<dbReference type="InterPro" id="IPR035892">
    <property type="entry name" value="C2_domain_sf"/>
</dbReference>
<dbReference type="InterPro" id="IPR028928">
    <property type="entry name" value="CC2D2AN-C2"/>
</dbReference>
<dbReference type="InterPro" id="IPR056288">
    <property type="entry name" value="CEP76_C"/>
</dbReference>
<dbReference type="InterPro" id="IPR056290">
    <property type="entry name" value="CEPT76/DRC7_peptidase-like_dom"/>
</dbReference>
<dbReference type="InterPro" id="IPR041510">
    <property type="entry name" value="DUF5523"/>
</dbReference>
<dbReference type="InterPro" id="IPR052434">
    <property type="entry name" value="Tectonic-like_complex_comp"/>
</dbReference>
<dbReference type="PANTHER" id="PTHR20837">
    <property type="entry name" value="CENTROSOMAL PROTEIN-RELATED"/>
    <property type="match status" value="1"/>
</dbReference>
<dbReference type="PANTHER" id="PTHR20837:SF7">
    <property type="entry name" value="COILED-COIL AND C2 DOMAIN-CONTAINING PROTEIN 2A"/>
    <property type="match status" value="1"/>
</dbReference>
<dbReference type="Pfam" id="PF15625">
    <property type="entry name" value="CC2D2AN-C2"/>
    <property type="match status" value="1"/>
</dbReference>
<dbReference type="Pfam" id="PF24652">
    <property type="entry name" value="CEP76_C"/>
    <property type="match status" value="1"/>
</dbReference>
<dbReference type="Pfam" id="PF24656">
    <property type="entry name" value="CEPT76_peptidase"/>
    <property type="match status" value="1"/>
</dbReference>
<dbReference type="Pfam" id="PF17661">
    <property type="entry name" value="DUF5523"/>
    <property type="match status" value="1"/>
</dbReference>
<dbReference type="SMART" id="SM00239">
    <property type="entry name" value="C2"/>
    <property type="match status" value="1"/>
</dbReference>
<dbReference type="PROSITE" id="PS50004">
    <property type="entry name" value="C2"/>
    <property type="match status" value="1"/>
</dbReference>